<comment type="function">
    <text evidence="1">Catalyzes a trans-dehydration via an enolate intermediate.</text>
</comment>
<comment type="catalytic activity">
    <reaction evidence="1">
        <text>3-dehydroquinate = 3-dehydroshikimate + H2O</text>
        <dbReference type="Rhea" id="RHEA:21096"/>
        <dbReference type="ChEBI" id="CHEBI:15377"/>
        <dbReference type="ChEBI" id="CHEBI:16630"/>
        <dbReference type="ChEBI" id="CHEBI:32364"/>
        <dbReference type="EC" id="4.2.1.10"/>
    </reaction>
</comment>
<comment type="pathway">
    <text evidence="1">Metabolic intermediate biosynthesis; chorismate biosynthesis; chorismate from D-erythrose 4-phosphate and phosphoenolpyruvate: step 3/7.</text>
</comment>
<comment type="subunit">
    <text evidence="1">Homododecamer.</text>
</comment>
<comment type="similarity">
    <text evidence="1">Belongs to the type-II 3-dehydroquinase family.</text>
</comment>
<dbReference type="EC" id="4.2.1.10" evidence="1"/>
<dbReference type="EMBL" id="CP001151">
    <property type="protein sequence ID" value="ACM03401.1"/>
    <property type="molecule type" value="Genomic_DNA"/>
</dbReference>
<dbReference type="RefSeq" id="WP_012641098.1">
    <property type="nucleotide sequence ID" value="NC_011958.1"/>
</dbReference>
<dbReference type="SMR" id="B9KTM3"/>
<dbReference type="GeneID" id="67448867"/>
<dbReference type="KEGG" id="rsk:RSKD131_3541"/>
<dbReference type="HOGENOM" id="CLU_090968_2_0_5"/>
<dbReference type="UniPathway" id="UPA00053">
    <property type="reaction ID" value="UER00086"/>
</dbReference>
<dbReference type="GO" id="GO:0003855">
    <property type="term" value="F:3-dehydroquinate dehydratase activity"/>
    <property type="evidence" value="ECO:0007669"/>
    <property type="project" value="UniProtKB-UniRule"/>
</dbReference>
<dbReference type="GO" id="GO:0008652">
    <property type="term" value="P:amino acid biosynthetic process"/>
    <property type="evidence" value="ECO:0007669"/>
    <property type="project" value="UniProtKB-KW"/>
</dbReference>
<dbReference type="GO" id="GO:0009073">
    <property type="term" value="P:aromatic amino acid family biosynthetic process"/>
    <property type="evidence" value="ECO:0007669"/>
    <property type="project" value="UniProtKB-KW"/>
</dbReference>
<dbReference type="GO" id="GO:0009423">
    <property type="term" value="P:chorismate biosynthetic process"/>
    <property type="evidence" value="ECO:0007669"/>
    <property type="project" value="UniProtKB-UniRule"/>
</dbReference>
<dbReference type="GO" id="GO:0019631">
    <property type="term" value="P:quinate catabolic process"/>
    <property type="evidence" value="ECO:0007669"/>
    <property type="project" value="TreeGrafter"/>
</dbReference>
<dbReference type="CDD" id="cd00466">
    <property type="entry name" value="DHQase_II"/>
    <property type="match status" value="1"/>
</dbReference>
<dbReference type="Gene3D" id="3.40.50.9100">
    <property type="entry name" value="Dehydroquinase, class II"/>
    <property type="match status" value="1"/>
</dbReference>
<dbReference type="HAMAP" id="MF_00169">
    <property type="entry name" value="AroQ"/>
    <property type="match status" value="1"/>
</dbReference>
<dbReference type="InterPro" id="IPR001874">
    <property type="entry name" value="DHquinase_II"/>
</dbReference>
<dbReference type="InterPro" id="IPR018509">
    <property type="entry name" value="DHquinase_II_CS"/>
</dbReference>
<dbReference type="InterPro" id="IPR036441">
    <property type="entry name" value="DHquinase_II_sf"/>
</dbReference>
<dbReference type="NCBIfam" id="TIGR01088">
    <property type="entry name" value="aroQ"/>
    <property type="match status" value="1"/>
</dbReference>
<dbReference type="NCBIfam" id="NF003805">
    <property type="entry name" value="PRK05395.1-2"/>
    <property type="match status" value="1"/>
</dbReference>
<dbReference type="NCBIfam" id="NF003806">
    <property type="entry name" value="PRK05395.1-3"/>
    <property type="match status" value="1"/>
</dbReference>
<dbReference type="NCBIfam" id="NF003807">
    <property type="entry name" value="PRK05395.1-4"/>
    <property type="match status" value="1"/>
</dbReference>
<dbReference type="PANTHER" id="PTHR21272">
    <property type="entry name" value="CATABOLIC 3-DEHYDROQUINASE"/>
    <property type="match status" value="1"/>
</dbReference>
<dbReference type="PANTHER" id="PTHR21272:SF3">
    <property type="entry name" value="CATABOLIC 3-DEHYDROQUINASE"/>
    <property type="match status" value="1"/>
</dbReference>
<dbReference type="Pfam" id="PF01220">
    <property type="entry name" value="DHquinase_II"/>
    <property type="match status" value="1"/>
</dbReference>
<dbReference type="PIRSF" id="PIRSF001399">
    <property type="entry name" value="DHquinase_II"/>
    <property type="match status" value="1"/>
</dbReference>
<dbReference type="SUPFAM" id="SSF52304">
    <property type="entry name" value="Type II 3-dehydroquinate dehydratase"/>
    <property type="match status" value="1"/>
</dbReference>
<dbReference type="PROSITE" id="PS01029">
    <property type="entry name" value="DEHYDROQUINASE_II"/>
    <property type="match status" value="1"/>
</dbReference>
<gene>
    <name evidence="1" type="primary">aroQ</name>
    <name type="ordered locus">RSKD131_3541</name>
</gene>
<sequence>MTTTIYILNGPNLNLLGQRQPEIYGHETLADVERRCAAVAAEKGFSVRLFQSNHEGAIVDQIHEARQAACGIVINPAAYTHTSVAILDALHAFEGPVIECHISNVHKRESFRHHSYVSLRADGVLAGFGIEGYELAVRRICSLCAGG</sequence>
<evidence type="ECO:0000255" key="1">
    <source>
        <dbReference type="HAMAP-Rule" id="MF_00169"/>
    </source>
</evidence>
<proteinExistence type="inferred from homology"/>
<keyword id="KW-0028">Amino-acid biosynthesis</keyword>
<keyword id="KW-0057">Aromatic amino acid biosynthesis</keyword>
<keyword id="KW-0456">Lyase</keyword>
<feature type="chain" id="PRO_1000123697" description="3-dehydroquinate dehydratase">
    <location>
        <begin position="1"/>
        <end position="147"/>
    </location>
</feature>
<feature type="active site" description="Proton acceptor" evidence="1">
    <location>
        <position position="24"/>
    </location>
</feature>
<feature type="active site" description="Proton donor" evidence="1">
    <location>
        <position position="101"/>
    </location>
</feature>
<feature type="binding site" evidence="1">
    <location>
        <position position="75"/>
    </location>
    <ligand>
        <name>substrate</name>
    </ligand>
</feature>
<feature type="binding site" evidence="1">
    <location>
        <position position="81"/>
    </location>
    <ligand>
        <name>substrate</name>
    </ligand>
</feature>
<feature type="binding site" evidence="1">
    <location>
        <position position="88"/>
    </location>
    <ligand>
        <name>substrate</name>
    </ligand>
</feature>
<feature type="binding site" evidence="1">
    <location>
        <begin position="102"/>
        <end position="103"/>
    </location>
    <ligand>
        <name>substrate</name>
    </ligand>
</feature>
<feature type="binding site" evidence="1">
    <location>
        <position position="112"/>
    </location>
    <ligand>
        <name>substrate</name>
    </ligand>
</feature>
<feature type="site" description="Transition state stabilizer" evidence="1">
    <location>
        <position position="19"/>
    </location>
</feature>
<reference key="1">
    <citation type="journal article" date="2009" name="J. Bacteriol.">
        <title>Complete genome sequence of Rhodobacter sphaeroides KD131.</title>
        <authorList>
            <person name="Lim S.-K."/>
            <person name="Kim S.J."/>
            <person name="Cha S.H."/>
            <person name="Oh Y.-K."/>
            <person name="Rhee H.-J."/>
            <person name="Kim M.-S."/>
            <person name="Lee J.K."/>
        </authorList>
    </citation>
    <scope>NUCLEOTIDE SEQUENCE [LARGE SCALE GENOMIC DNA]</scope>
    <source>
        <strain>KD131 / KCTC 12085</strain>
    </source>
</reference>
<organism>
    <name type="scientific">Cereibacter sphaeroides (strain KD131 / KCTC 12085)</name>
    <name type="common">Rhodobacter sphaeroides</name>
    <dbReference type="NCBI Taxonomy" id="557760"/>
    <lineage>
        <taxon>Bacteria</taxon>
        <taxon>Pseudomonadati</taxon>
        <taxon>Pseudomonadota</taxon>
        <taxon>Alphaproteobacteria</taxon>
        <taxon>Rhodobacterales</taxon>
        <taxon>Paracoccaceae</taxon>
        <taxon>Cereibacter</taxon>
    </lineage>
</organism>
<protein>
    <recommendedName>
        <fullName evidence="1">3-dehydroquinate dehydratase</fullName>
        <shortName evidence="1">3-dehydroquinase</shortName>
        <ecNumber evidence="1">4.2.1.10</ecNumber>
    </recommendedName>
    <alternativeName>
        <fullName evidence="1">Type II DHQase</fullName>
    </alternativeName>
</protein>
<accession>B9KTM3</accession>
<name>AROQ_CERSK</name>